<gene>
    <name evidence="1" type="primary">trpD</name>
    <name type="ordered locus">Rru_A1896</name>
</gene>
<comment type="function">
    <text evidence="1">Catalyzes the transfer of the phosphoribosyl group of 5-phosphorylribose-1-pyrophosphate (PRPP) to anthranilate to yield N-(5'-phosphoribosyl)-anthranilate (PRA).</text>
</comment>
<comment type="catalytic activity">
    <reaction evidence="1">
        <text>N-(5-phospho-beta-D-ribosyl)anthranilate + diphosphate = 5-phospho-alpha-D-ribose 1-diphosphate + anthranilate</text>
        <dbReference type="Rhea" id="RHEA:11768"/>
        <dbReference type="ChEBI" id="CHEBI:16567"/>
        <dbReference type="ChEBI" id="CHEBI:18277"/>
        <dbReference type="ChEBI" id="CHEBI:33019"/>
        <dbReference type="ChEBI" id="CHEBI:58017"/>
        <dbReference type="EC" id="2.4.2.18"/>
    </reaction>
</comment>
<comment type="cofactor">
    <cofactor evidence="1">
        <name>Mg(2+)</name>
        <dbReference type="ChEBI" id="CHEBI:18420"/>
    </cofactor>
    <text evidence="1">Binds 2 magnesium ions per monomer.</text>
</comment>
<comment type="pathway">
    <text evidence="1">Amino-acid biosynthesis; L-tryptophan biosynthesis; L-tryptophan from chorismate: step 2/5.</text>
</comment>
<comment type="subunit">
    <text evidence="1">Homodimer.</text>
</comment>
<comment type="similarity">
    <text evidence="1">Belongs to the anthranilate phosphoribosyltransferase family.</text>
</comment>
<sequence>MTTQPTTANDIKGLIAMVATGRPLSEADATRAFEAIMSGNATPAQIGGFLMALRVRGETVAEITAAARTMRDKAARIQAPAGAIDIVGTGGDCAGTYNISTAAALVTAACGVPVAKHGNRAASSKSGSADVLAALGVNLDADLALVERSIAEVGIGFMFAQRHHSAMKHVAPARSELGTRTIFNLLGPLANPAGARFELMGVFAQEWVEPLAEVLGRLGAERAWVVHGSDGLDEITTTGPTHVAEFRGGVVRSFDITPADAGLPLAKAEDLQGADPEANAQALRALLEGVKTPYRDIVVFNAAAALVVAGAAEDLATGAARAAQAIDSGAAKDTLARMIAIIGAPAS</sequence>
<organism>
    <name type="scientific">Rhodospirillum rubrum (strain ATCC 11170 / ATH 1.1.1 / DSM 467 / LMG 4362 / NCIMB 8255 / S1)</name>
    <dbReference type="NCBI Taxonomy" id="269796"/>
    <lineage>
        <taxon>Bacteria</taxon>
        <taxon>Pseudomonadati</taxon>
        <taxon>Pseudomonadota</taxon>
        <taxon>Alphaproteobacteria</taxon>
        <taxon>Rhodospirillales</taxon>
        <taxon>Rhodospirillaceae</taxon>
        <taxon>Rhodospirillum</taxon>
    </lineage>
</organism>
<protein>
    <recommendedName>
        <fullName evidence="1">Anthranilate phosphoribosyltransferase</fullName>
        <ecNumber evidence="1">2.4.2.18</ecNumber>
    </recommendedName>
</protein>
<reference key="1">
    <citation type="journal article" date="2011" name="Stand. Genomic Sci.">
        <title>Complete genome sequence of Rhodospirillum rubrum type strain (S1).</title>
        <authorList>
            <person name="Munk A.C."/>
            <person name="Copeland A."/>
            <person name="Lucas S."/>
            <person name="Lapidus A."/>
            <person name="Del Rio T.G."/>
            <person name="Barry K."/>
            <person name="Detter J.C."/>
            <person name="Hammon N."/>
            <person name="Israni S."/>
            <person name="Pitluck S."/>
            <person name="Brettin T."/>
            <person name="Bruce D."/>
            <person name="Han C."/>
            <person name="Tapia R."/>
            <person name="Gilna P."/>
            <person name="Schmutz J."/>
            <person name="Larimer F."/>
            <person name="Land M."/>
            <person name="Kyrpides N.C."/>
            <person name="Mavromatis K."/>
            <person name="Richardson P."/>
            <person name="Rohde M."/>
            <person name="Goeker M."/>
            <person name="Klenk H.P."/>
            <person name="Zhang Y."/>
            <person name="Roberts G.P."/>
            <person name="Reslewic S."/>
            <person name="Schwartz D.C."/>
        </authorList>
    </citation>
    <scope>NUCLEOTIDE SEQUENCE [LARGE SCALE GENOMIC DNA]</scope>
    <source>
        <strain>ATCC 11170 / ATH 1.1.1 / DSM 467 / LMG 4362 / NCIMB 8255 / S1</strain>
    </source>
</reference>
<proteinExistence type="inferred from homology"/>
<name>TRPD_RHORT</name>
<keyword id="KW-0028">Amino-acid biosynthesis</keyword>
<keyword id="KW-0057">Aromatic amino acid biosynthesis</keyword>
<keyword id="KW-0328">Glycosyltransferase</keyword>
<keyword id="KW-0460">Magnesium</keyword>
<keyword id="KW-0479">Metal-binding</keyword>
<keyword id="KW-1185">Reference proteome</keyword>
<keyword id="KW-0808">Transferase</keyword>
<keyword id="KW-0822">Tryptophan biosynthesis</keyword>
<feature type="chain" id="PRO_0000325457" description="Anthranilate phosphoribosyltransferase">
    <location>
        <begin position="1"/>
        <end position="347"/>
    </location>
</feature>
<feature type="binding site" evidence="1">
    <location>
        <position position="88"/>
    </location>
    <ligand>
        <name>5-phospho-alpha-D-ribose 1-diphosphate</name>
        <dbReference type="ChEBI" id="CHEBI:58017"/>
    </ligand>
</feature>
<feature type="binding site" evidence="1">
    <location>
        <position position="88"/>
    </location>
    <ligand>
        <name>anthranilate</name>
        <dbReference type="ChEBI" id="CHEBI:16567"/>
        <label>1</label>
    </ligand>
</feature>
<feature type="binding site" evidence="1">
    <location>
        <begin position="91"/>
        <end position="92"/>
    </location>
    <ligand>
        <name>5-phospho-alpha-D-ribose 1-diphosphate</name>
        <dbReference type="ChEBI" id="CHEBI:58017"/>
    </ligand>
</feature>
<feature type="binding site" evidence="1">
    <location>
        <position position="96"/>
    </location>
    <ligand>
        <name>5-phospho-alpha-D-ribose 1-diphosphate</name>
        <dbReference type="ChEBI" id="CHEBI:58017"/>
    </ligand>
</feature>
<feature type="binding site" evidence="1">
    <location>
        <begin position="98"/>
        <end position="101"/>
    </location>
    <ligand>
        <name>5-phospho-alpha-D-ribose 1-diphosphate</name>
        <dbReference type="ChEBI" id="CHEBI:58017"/>
    </ligand>
</feature>
<feature type="binding site" evidence="1">
    <location>
        <position position="100"/>
    </location>
    <ligand>
        <name>Mg(2+)</name>
        <dbReference type="ChEBI" id="CHEBI:18420"/>
        <label>1</label>
    </ligand>
</feature>
<feature type="binding site" evidence="1">
    <location>
        <begin position="116"/>
        <end position="124"/>
    </location>
    <ligand>
        <name>5-phospho-alpha-D-ribose 1-diphosphate</name>
        <dbReference type="ChEBI" id="CHEBI:58017"/>
    </ligand>
</feature>
<feature type="binding site" evidence="1">
    <location>
        <position position="119"/>
    </location>
    <ligand>
        <name>anthranilate</name>
        <dbReference type="ChEBI" id="CHEBI:16567"/>
        <label>1</label>
    </ligand>
</feature>
<feature type="binding site" evidence="1">
    <location>
        <position position="128"/>
    </location>
    <ligand>
        <name>5-phospho-alpha-D-ribose 1-diphosphate</name>
        <dbReference type="ChEBI" id="CHEBI:58017"/>
    </ligand>
</feature>
<feature type="binding site" evidence="1">
    <location>
        <position position="174"/>
    </location>
    <ligand>
        <name>anthranilate</name>
        <dbReference type="ChEBI" id="CHEBI:16567"/>
        <label>2</label>
    </ligand>
</feature>
<feature type="binding site" evidence="1">
    <location>
        <position position="233"/>
    </location>
    <ligand>
        <name>Mg(2+)</name>
        <dbReference type="ChEBI" id="CHEBI:18420"/>
        <label>2</label>
    </ligand>
</feature>
<feature type="binding site" evidence="1">
    <location>
        <position position="234"/>
    </location>
    <ligand>
        <name>Mg(2+)</name>
        <dbReference type="ChEBI" id="CHEBI:18420"/>
        <label>1</label>
    </ligand>
</feature>
<feature type="binding site" evidence="1">
    <location>
        <position position="234"/>
    </location>
    <ligand>
        <name>Mg(2+)</name>
        <dbReference type="ChEBI" id="CHEBI:18420"/>
        <label>2</label>
    </ligand>
</feature>
<evidence type="ECO:0000255" key="1">
    <source>
        <dbReference type="HAMAP-Rule" id="MF_00211"/>
    </source>
</evidence>
<accession>Q2RT49</accession>
<dbReference type="EC" id="2.4.2.18" evidence="1"/>
<dbReference type="EMBL" id="CP000230">
    <property type="protein sequence ID" value="ABC22696.1"/>
    <property type="molecule type" value="Genomic_DNA"/>
</dbReference>
<dbReference type="RefSeq" id="WP_011389649.1">
    <property type="nucleotide sequence ID" value="NC_007643.1"/>
</dbReference>
<dbReference type="RefSeq" id="YP_426983.1">
    <property type="nucleotide sequence ID" value="NC_007643.1"/>
</dbReference>
<dbReference type="SMR" id="Q2RT49"/>
<dbReference type="STRING" id="269796.Rru_A1896"/>
<dbReference type="EnsemblBacteria" id="ABC22696">
    <property type="protein sequence ID" value="ABC22696"/>
    <property type="gene ID" value="Rru_A1896"/>
</dbReference>
<dbReference type="KEGG" id="rru:Rru_A1896"/>
<dbReference type="PATRIC" id="fig|269796.9.peg.1977"/>
<dbReference type="eggNOG" id="COG0547">
    <property type="taxonomic scope" value="Bacteria"/>
</dbReference>
<dbReference type="HOGENOM" id="CLU_034315_2_1_5"/>
<dbReference type="PhylomeDB" id="Q2RT49"/>
<dbReference type="UniPathway" id="UPA00035">
    <property type="reaction ID" value="UER00041"/>
</dbReference>
<dbReference type="Proteomes" id="UP000001929">
    <property type="component" value="Chromosome"/>
</dbReference>
<dbReference type="GO" id="GO:0005829">
    <property type="term" value="C:cytosol"/>
    <property type="evidence" value="ECO:0007669"/>
    <property type="project" value="TreeGrafter"/>
</dbReference>
<dbReference type="GO" id="GO:0004048">
    <property type="term" value="F:anthranilate phosphoribosyltransferase activity"/>
    <property type="evidence" value="ECO:0007669"/>
    <property type="project" value="UniProtKB-UniRule"/>
</dbReference>
<dbReference type="GO" id="GO:0000287">
    <property type="term" value="F:magnesium ion binding"/>
    <property type="evidence" value="ECO:0007669"/>
    <property type="project" value="UniProtKB-UniRule"/>
</dbReference>
<dbReference type="GO" id="GO:0000162">
    <property type="term" value="P:L-tryptophan biosynthetic process"/>
    <property type="evidence" value="ECO:0007669"/>
    <property type="project" value="UniProtKB-UniRule"/>
</dbReference>
<dbReference type="FunFam" id="3.40.1030.10:FF:000002">
    <property type="entry name" value="Anthranilate phosphoribosyltransferase"/>
    <property type="match status" value="1"/>
</dbReference>
<dbReference type="Gene3D" id="3.40.1030.10">
    <property type="entry name" value="Nucleoside phosphorylase/phosphoribosyltransferase catalytic domain"/>
    <property type="match status" value="1"/>
</dbReference>
<dbReference type="Gene3D" id="1.20.970.10">
    <property type="entry name" value="Transferase, Pyrimidine Nucleoside Phosphorylase, Chain C"/>
    <property type="match status" value="1"/>
</dbReference>
<dbReference type="HAMAP" id="MF_00211">
    <property type="entry name" value="TrpD"/>
    <property type="match status" value="1"/>
</dbReference>
<dbReference type="InterPro" id="IPR005940">
    <property type="entry name" value="Anthranilate_Pribosyl_Tfrase"/>
</dbReference>
<dbReference type="InterPro" id="IPR000312">
    <property type="entry name" value="Glycosyl_Trfase_fam3"/>
</dbReference>
<dbReference type="InterPro" id="IPR017459">
    <property type="entry name" value="Glycosyl_Trfase_fam3_N_dom"/>
</dbReference>
<dbReference type="InterPro" id="IPR036320">
    <property type="entry name" value="Glycosyl_Trfase_fam3_N_dom_sf"/>
</dbReference>
<dbReference type="InterPro" id="IPR035902">
    <property type="entry name" value="Nuc_phospho_transferase"/>
</dbReference>
<dbReference type="NCBIfam" id="TIGR01245">
    <property type="entry name" value="trpD"/>
    <property type="match status" value="1"/>
</dbReference>
<dbReference type="PANTHER" id="PTHR43285">
    <property type="entry name" value="ANTHRANILATE PHOSPHORIBOSYLTRANSFERASE"/>
    <property type="match status" value="1"/>
</dbReference>
<dbReference type="PANTHER" id="PTHR43285:SF2">
    <property type="entry name" value="ANTHRANILATE PHOSPHORIBOSYLTRANSFERASE"/>
    <property type="match status" value="1"/>
</dbReference>
<dbReference type="Pfam" id="PF02885">
    <property type="entry name" value="Glycos_trans_3N"/>
    <property type="match status" value="1"/>
</dbReference>
<dbReference type="Pfam" id="PF00591">
    <property type="entry name" value="Glycos_transf_3"/>
    <property type="match status" value="1"/>
</dbReference>
<dbReference type="SUPFAM" id="SSF52418">
    <property type="entry name" value="Nucleoside phosphorylase/phosphoribosyltransferase catalytic domain"/>
    <property type="match status" value="1"/>
</dbReference>
<dbReference type="SUPFAM" id="SSF47648">
    <property type="entry name" value="Nucleoside phosphorylase/phosphoribosyltransferase N-terminal domain"/>
    <property type="match status" value="1"/>
</dbReference>